<accession>Q6CMA5</accession>
<organism>
    <name type="scientific">Kluyveromyces lactis (strain ATCC 8585 / CBS 2359 / DSM 70799 / NBRC 1267 / NRRL Y-1140 / WM37)</name>
    <name type="common">Yeast</name>
    <name type="synonym">Candida sphaerica</name>
    <dbReference type="NCBI Taxonomy" id="284590"/>
    <lineage>
        <taxon>Eukaryota</taxon>
        <taxon>Fungi</taxon>
        <taxon>Dikarya</taxon>
        <taxon>Ascomycota</taxon>
        <taxon>Saccharomycotina</taxon>
        <taxon>Saccharomycetes</taxon>
        <taxon>Saccharomycetales</taxon>
        <taxon>Saccharomycetaceae</taxon>
        <taxon>Kluyveromyces</taxon>
    </lineage>
</organism>
<sequence>MFALSKSLRQIKRQTIQYRFISGISKDEVYCIIDTIKSSHEWHKLKQDQKMQAYVAEALTNPTSENVSELMQLKRKMMRTLNENYNLALGYIEEGLPGPIERLKFRSEFLRVVDSEHYAYFSKSLDHIRYCKGLDRATRRKEFYNCIELHRRCNPEVTEGSGILLPDDIHQWFFVFVPPDERMKHYLFLIENNVLISGHYAGLTQERMLKGSEMEYRVASFLHFIEDPEKRHIFDEKFSVMHPFRPMRRIVNLLITKKDMVHIKEYLDVLTTRLENVELRNERIPYDVRKLYFIEFMHTLQHFARCTNYIDMFLETVHSMMDALPKDTPVPFIRKSFVEILNYFQRIGDTETVFKIMSMFNEYPLTEPNTKFTNEMLGRILFSLRQFKDPKLTASYIVIAYKSIKTKKMLNNLGLWCLIFGNGFGRLNKKAIRDAKQPEKFINLNVPESLRFKRAPDSVALNELYIVVFDYYKSKLSPDEYRELVVKCYKYYCDFLKNHVNTYLQWRIDTSILRTMIHRAKFDIKDDRLAYEMLMNFYAMNLNPRFDSKNTPFGLVLYRNEAINQQEFNQVLELMQRCRAPMDHKIIITIVLKFIKSGNIDLAHEWYTRLLKTGYPLRHFKMIEEAKRLNWDIPEPAERYYEECERKNQLEEENFDDIYLQNPAEDSYTNDLIEAAKKIGRIYATSIGARIIPENDKAAMELNQKKNAYGT</sequence>
<comment type="function">
    <text evidence="1">Translation factor specific for subunit 6 of the mitochondrial ATPase. Required for assembly of the CF(0) component of the ATPase (By similarity).</text>
</comment>
<comment type="subcellular location">
    <subcellularLocation>
        <location evidence="1">Mitochondrion inner membrane</location>
        <topology evidence="1">Peripheral membrane protein</topology>
        <orientation evidence="1">Matrix side</orientation>
    </subcellularLocation>
</comment>
<comment type="similarity">
    <text evidence="3">Belongs to the ATP22 family.</text>
</comment>
<evidence type="ECO:0000250" key="1"/>
<evidence type="ECO:0000255" key="2"/>
<evidence type="ECO:0000305" key="3"/>
<dbReference type="EMBL" id="CR382125">
    <property type="protein sequence ID" value="CAH00021.1"/>
    <property type="molecule type" value="Genomic_DNA"/>
</dbReference>
<dbReference type="RefSeq" id="XP_454934.1">
    <property type="nucleotide sequence ID" value="XM_454934.1"/>
</dbReference>
<dbReference type="FunCoup" id="Q6CMA5">
    <property type="interactions" value="37"/>
</dbReference>
<dbReference type="PaxDb" id="284590-Q6CMA5"/>
<dbReference type="KEGG" id="kla:KLLA0_E21715g"/>
<dbReference type="eggNOG" id="ENOG502QUX9">
    <property type="taxonomic scope" value="Eukaryota"/>
</dbReference>
<dbReference type="HOGENOM" id="CLU_024415_0_0_1"/>
<dbReference type="InParanoid" id="Q6CMA5"/>
<dbReference type="OMA" id="HINNCSE"/>
<dbReference type="Proteomes" id="UP000000598">
    <property type="component" value="Chromosome E"/>
</dbReference>
<dbReference type="GO" id="GO:0005743">
    <property type="term" value="C:mitochondrial inner membrane"/>
    <property type="evidence" value="ECO:0007669"/>
    <property type="project" value="UniProtKB-SubCell"/>
</dbReference>
<dbReference type="GO" id="GO:0045182">
    <property type="term" value="F:translation regulator activity"/>
    <property type="evidence" value="ECO:0007669"/>
    <property type="project" value="InterPro"/>
</dbReference>
<dbReference type="InterPro" id="IPR017207">
    <property type="entry name" value="Atp22"/>
</dbReference>
<dbReference type="PIRSF" id="PIRSF037437">
    <property type="entry name" value="Atp22"/>
    <property type="match status" value="1"/>
</dbReference>
<name>ATP22_KLULA</name>
<gene>
    <name type="primary">ATP22</name>
    <name type="ordered locus">KLLA0E21813g</name>
</gene>
<reference key="1">
    <citation type="journal article" date="2004" name="Nature">
        <title>Genome evolution in yeasts.</title>
        <authorList>
            <person name="Dujon B."/>
            <person name="Sherman D."/>
            <person name="Fischer G."/>
            <person name="Durrens P."/>
            <person name="Casaregola S."/>
            <person name="Lafontaine I."/>
            <person name="de Montigny J."/>
            <person name="Marck C."/>
            <person name="Neuveglise C."/>
            <person name="Talla E."/>
            <person name="Goffard N."/>
            <person name="Frangeul L."/>
            <person name="Aigle M."/>
            <person name="Anthouard V."/>
            <person name="Babour A."/>
            <person name="Barbe V."/>
            <person name="Barnay S."/>
            <person name="Blanchin S."/>
            <person name="Beckerich J.-M."/>
            <person name="Beyne E."/>
            <person name="Bleykasten C."/>
            <person name="Boisrame A."/>
            <person name="Boyer J."/>
            <person name="Cattolico L."/>
            <person name="Confanioleri F."/>
            <person name="de Daruvar A."/>
            <person name="Despons L."/>
            <person name="Fabre E."/>
            <person name="Fairhead C."/>
            <person name="Ferry-Dumazet H."/>
            <person name="Groppi A."/>
            <person name="Hantraye F."/>
            <person name="Hennequin C."/>
            <person name="Jauniaux N."/>
            <person name="Joyet P."/>
            <person name="Kachouri R."/>
            <person name="Kerrest A."/>
            <person name="Koszul R."/>
            <person name="Lemaire M."/>
            <person name="Lesur I."/>
            <person name="Ma L."/>
            <person name="Muller H."/>
            <person name="Nicaud J.-M."/>
            <person name="Nikolski M."/>
            <person name="Oztas S."/>
            <person name="Ozier-Kalogeropoulos O."/>
            <person name="Pellenz S."/>
            <person name="Potier S."/>
            <person name="Richard G.-F."/>
            <person name="Straub M.-L."/>
            <person name="Suleau A."/>
            <person name="Swennen D."/>
            <person name="Tekaia F."/>
            <person name="Wesolowski-Louvel M."/>
            <person name="Westhof E."/>
            <person name="Wirth B."/>
            <person name="Zeniou-Meyer M."/>
            <person name="Zivanovic Y."/>
            <person name="Bolotin-Fukuhara M."/>
            <person name="Thierry A."/>
            <person name="Bouchier C."/>
            <person name="Caudron B."/>
            <person name="Scarpelli C."/>
            <person name="Gaillardin C."/>
            <person name="Weissenbach J."/>
            <person name="Wincker P."/>
            <person name="Souciet J.-L."/>
        </authorList>
    </citation>
    <scope>NUCLEOTIDE SEQUENCE [LARGE SCALE GENOMIC DNA]</scope>
    <source>
        <strain>ATCC 8585 / CBS 2359 / DSM 70799 / NBRC 1267 / NRRL Y-1140 / WM37</strain>
    </source>
</reference>
<proteinExistence type="inferred from homology"/>
<feature type="transit peptide" description="Mitochondrion" evidence="2">
    <location>
        <begin position="1"/>
        <end position="28"/>
    </location>
</feature>
<feature type="chain" id="PRO_0000330047" description="Mitochondrial translation factor ATP22">
    <location>
        <begin position="29"/>
        <end position="711"/>
    </location>
</feature>
<protein>
    <recommendedName>
        <fullName>Mitochondrial translation factor ATP22</fullName>
    </recommendedName>
</protein>
<keyword id="KW-0472">Membrane</keyword>
<keyword id="KW-0496">Mitochondrion</keyword>
<keyword id="KW-0999">Mitochondrion inner membrane</keyword>
<keyword id="KW-1185">Reference proteome</keyword>
<keyword id="KW-0809">Transit peptide</keyword>
<keyword id="KW-0810">Translation regulation</keyword>